<feature type="chain" id="PRO_0000070195" description="Urotensin-2 receptor">
    <location>
        <begin position="1"/>
        <end position="385"/>
    </location>
</feature>
<feature type="topological domain" description="Extracellular" evidence="2">
    <location>
        <begin position="1"/>
        <end position="53"/>
    </location>
</feature>
<feature type="transmembrane region" description="Helical; Name=1" evidence="2">
    <location>
        <begin position="54"/>
        <end position="76"/>
    </location>
</feature>
<feature type="topological domain" description="Cytoplasmic" evidence="2">
    <location>
        <begin position="77"/>
        <end position="86"/>
    </location>
</feature>
<feature type="transmembrane region" description="Helical; Name=2" evidence="2">
    <location>
        <begin position="87"/>
        <end position="112"/>
    </location>
</feature>
<feature type="topological domain" description="Extracellular" evidence="2">
    <location>
        <begin position="113"/>
        <end position="123"/>
    </location>
</feature>
<feature type="transmembrane region" description="Helical; Name=3" evidence="2">
    <location>
        <begin position="124"/>
        <end position="145"/>
    </location>
</feature>
<feature type="topological domain" description="Cytoplasmic" evidence="2">
    <location>
        <begin position="146"/>
        <end position="166"/>
    </location>
</feature>
<feature type="transmembrane region" description="Helical; Name=4" evidence="2">
    <location>
        <begin position="167"/>
        <end position="185"/>
    </location>
</feature>
<feature type="topological domain" description="Extracellular" evidence="2">
    <location>
        <begin position="186"/>
        <end position="208"/>
    </location>
</feature>
<feature type="transmembrane region" description="Helical; Name=5" evidence="2">
    <location>
        <begin position="209"/>
        <end position="231"/>
    </location>
</feature>
<feature type="topological domain" description="Cytoplasmic" evidence="2">
    <location>
        <begin position="232"/>
        <end position="257"/>
    </location>
</feature>
<feature type="transmembrane region" description="Helical; Name=6" evidence="2">
    <location>
        <begin position="258"/>
        <end position="283"/>
    </location>
</feature>
<feature type="topological domain" description="Extracellular" evidence="2">
    <location>
        <begin position="284"/>
        <end position="298"/>
    </location>
</feature>
<feature type="transmembrane region" description="Helical; Name=7" evidence="2">
    <location>
        <begin position="299"/>
        <end position="320"/>
    </location>
</feature>
<feature type="topological domain" description="Cytoplasmic" evidence="2">
    <location>
        <begin position="321"/>
        <end position="385"/>
    </location>
</feature>
<feature type="glycosylation site" description="N-linked (GlcNAc...) asparagine" evidence="2">
    <location>
        <position position="28"/>
    </location>
</feature>
<feature type="glycosylation site" description="N-linked (GlcNAc...) asparagine" evidence="2">
    <location>
        <position position="32"/>
    </location>
</feature>
<feature type="disulfide bond" evidence="3">
    <location>
        <begin position="122"/>
        <end position="198"/>
    </location>
</feature>
<comment type="function">
    <text evidence="1">High affinity receptor for urotensin-2 and urotensin-2B. The activity of this receptor is mediated by a G-protein that activate a phosphatidylinositol-calcium second messenger system (By similarity).</text>
</comment>
<comment type="subcellular location">
    <subcellularLocation>
        <location>Cell membrane</location>
        <topology>Multi-pass membrane protein</topology>
    </subcellularLocation>
</comment>
<comment type="similarity">
    <text evidence="3">Belongs to the G-protein coupled receptor 1 family.</text>
</comment>
<evidence type="ECO:0000250" key="1"/>
<evidence type="ECO:0000255" key="2"/>
<evidence type="ECO:0000255" key="3">
    <source>
        <dbReference type="PROSITE-ProRule" id="PRU00521"/>
    </source>
</evidence>
<keyword id="KW-1003">Cell membrane</keyword>
<keyword id="KW-1015">Disulfide bond</keyword>
<keyword id="KW-0297">G-protein coupled receptor</keyword>
<keyword id="KW-0325">Glycoprotein</keyword>
<keyword id="KW-0472">Membrane</keyword>
<keyword id="KW-0675">Receptor</keyword>
<keyword id="KW-1185">Reference proteome</keyword>
<keyword id="KW-0807">Transducer</keyword>
<keyword id="KW-0812">Transmembrane</keyword>
<keyword id="KW-1133">Transmembrane helix</keyword>
<sequence>MALSLESTSFPMLAVSRSTASELPGGFNVSHNSSWTGPTDPSSLQDLVATGVIGAVLSTMGVVGVVGNVYTLVVMCRFLRASASMYVYVVNLALADLLYLLSIPFIVATYVTKDWHFGDVGCRVLFSLDFLTMHASIFTLTIMSSERYAAVLRPLDTVQRSKGYRKLLALGTWLLALLLTLPMMLAIRLVRRGSKSLCLPAWGPRAHRTYLTLLFGTSIVGPGLVIGLLYIRLARAYWLSQQASFKQTRRLPNPRVLYLILGIVLLFWACFLPFWLWQLLAQYHQAMPLTPETARIINYLTACLTYGNSCINPFLYTLLTKNYREYLRGRQRSLGSSCRGPGSAGSFLSSRVHLQQDSGRSLSSNSQQATETLVLSPVPPNGAFV</sequence>
<proteinExistence type="evidence at transcript level"/>
<reference key="1">
    <citation type="submission" date="2001-10" db="EMBL/GenBank/DDBJ databases">
        <title>Mouse urotensin II receptor GPR14.</title>
        <authorList>
            <person name="Qi J.-S."/>
            <person name="Santulli R."/>
            <person name="de Garavilla L."/>
            <person name="D'Andrea M."/>
            <person name="Smith C."/>
            <person name="Andrade-Gordon P."/>
        </authorList>
    </citation>
    <scope>NUCLEOTIDE SEQUENCE [MRNA]</scope>
    <source>
        <strain>BALB/cJ</strain>
    </source>
</reference>
<reference key="2">
    <citation type="journal article" date="2002" name="Br. J. Pharmacol.">
        <title>Molecular and pharmacological characterization of genes encoding urotensin-II peptides and their cognate G-protein-coupled receptors from the mouse and monkey.</title>
        <authorList>
            <person name="Elshourbagy N.A."/>
            <person name="Douglas S.A."/>
            <person name="Shabon U."/>
            <person name="Harrison S."/>
            <person name="Duddy G."/>
            <person name="Sechler J.L."/>
            <person name="Ao Z."/>
            <person name="Maleeff B.E."/>
            <person name="Naselsky D."/>
            <person name="Disa J."/>
            <person name="Aiyar N.V."/>
        </authorList>
    </citation>
    <scope>NUCLEOTIDE SEQUENCE [MRNA]</scope>
</reference>
<gene>
    <name type="primary">Uts2r</name>
    <name type="synonym">Gpr14</name>
</gene>
<protein>
    <recommendedName>
        <fullName>Urotensin-2 receptor</fullName>
        <shortName>UR-2-R</shortName>
    </recommendedName>
    <alternativeName>
        <fullName>G-protein coupled receptor 14</fullName>
    </alternativeName>
    <alternativeName>
        <fullName>Urotensin II receptor</fullName>
        <shortName>UR-II-R</shortName>
    </alternativeName>
</protein>
<dbReference type="EMBL" id="AF441863">
    <property type="protein sequence ID" value="AAL34551.1"/>
    <property type="molecule type" value="mRNA"/>
</dbReference>
<dbReference type="EMBL" id="AY065981">
    <property type="protein sequence ID" value="AAL55427.1"/>
    <property type="molecule type" value="mRNA"/>
</dbReference>
<dbReference type="CCDS" id="CCDS25769.1"/>
<dbReference type="RefSeq" id="NP_663415.1">
    <property type="nucleotide sequence ID" value="NM_145440.1"/>
</dbReference>
<dbReference type="SMR" id="Q8VIH9"/>
<dbReference type="FunCoup" id="Q8VIH9">
    <property type="interactions" value="705"/>
</dbReference>
<dbReference type="STRING" id="10090.ENSMUSP00000046920"/>
<dbReference type="BindingDB" id="Q8VIH9"/>
<dbReference type="ChEMBL" id="CHEMBL2346494"/>
<dbReference type="GuidetoPHARMACOLOGY" id="365"/>
<dbReference type="GlyCosmos" id="Q8VIH9">
    <property type="glycosylation" value="2 sites, No reported glycans"/>
</dbReference>
<dbReference type="GlyGen" id="Q8VIH9">
    <property type="glycosylation" value="3 sites"/>
</dbReference>
<dbReference type="iPTMnet" id="Q8VIH9"/>
<dbReference type="PhosphoSitePlus" id="Q8VIH9"/>
<dbReference type="PaxDb" id="10090-ENSMUSP00000046920"/>
<dbReference type="DNASU" id="217369"/>
<dbReference type="Ensembl" id="ENSMUST00000039044.2">
    <property type="protein sequence ID" value="ENSMUSP00000046920.2"/>
    <property type="gene ID" value="ENSMUSG00000039321.2"/>
</dbReference>
<dbReference type="GeneID" id="217369"/>
<dbReference type="KEGG" id="mmu:217369"/>
<dbReference type="UCSC" id="uc007mvj.1">
    <property type="organism name" value="mouse"/>
</dbReference>
<dbReference type="AGR" id="MGI:2183450"/>
<dbReference type="CTD" id="2837"/>
<dbReference type="MGI" id="MGI:2183450">
    <property type="gene designation" value="Uts2r"/>
</dbReference>
<dbReference type="VEuPathDB" id="HostDB:ENSMUSG00000039321"/>
<dbReference type="eggNOG" id="KOG3656">
    <property type="taxonomic scope" value="Eukaryota"/>
</dbReference>
<dbReference type="GeneTree" id="ENSGT00940000156819"/>
<dbReference type="HOGENOM" id="CLU_009579_1_0_1"/>
<dbReference type="InParanoid" id="Q8VIH9"/>
<dbReference type="OMA" id="PMMLAIR"/>
<dbReference type="OrthoDB" id="6076970at2759"/>
<dbReference type="PhylomeDB" id="Q8VIH9"/>
<dbReference type="TreeFam" id="TF334200"/>
<dbReference type="Reactome" id="R-MMU-375276">
    <property type="pathway name" value="Peptide ligand-binding receptors"/>
</dbReference>
<dbReference type="Reactome" id="R-MMU-416476">
    <property type="pathway name" value="G alpha (q) signalling events"/>
</dbReference>
<dbReference type="BioGRID-ORCS" id="217369">
    <property type="hits" value="1 hit in 78 CRISPR screens"/>
</dbReference>
<dbReference type="PRO" id="PR:Q8VIH9"/>
<dbReference type="Proteomes" id="UP000000589">
    <property type="component" value="Chromosome 11"/>
</dbReference>
<dbReference type="RNAct" id="Q8VIH9">
    <property type="molecule type" value="protein"/>
</dbReference>
<dbReference type="Bgee" id="ENSMUSG00000039321">
    <property type="expression patterns" value="Expressed in embryonic cell in blastocyst and 24 other cell types or tissues"/>
</dbReference>
<dbReference type="ExpressionAtlas" id="Q8VIH9">
    <property type="expression patterns" value="baseline and differential"/>
</dbReference>
<dbReference type="GO" id="GO:0005886">
    <property type="term" value="C:plasma membrane"/>
    <property type="evidence" value="ECO:0007669"/>
    <property type="project" value="UniProtKB-SubCell"/>
</dbReference>
<dbReference type="GO" id="GO:0001604">
    <property type="term" value="F:urotensin II receptor activity"/>
    <property type="evidence" value="ECO:0007669"/>
    <property type="project" value="InterPro"/>
</dbReference>
<dbReference type="GO" id="GO:0097746">
    <property type="term" value="P:blood vessel diameter maintenance"/>
    <property type="evidence" value="ECO:0007669"/>
    <property type="project" value="InterPro"/>
</dbReference>
<dbReference type="GO" id="GO:0008217">
    <property type="term" value="P:regulation of blood pressure"/>
    <property type="evidence" value="ECO:0007669"/>
    <property type="project" value="InterPro"/>
</dbReference>
<dbReference type="CDD" id="cd14999">
    <property type="entry name" value="7tmA_UII-R"/>
    <property type="match status" value="1"/>
</dbReference>
<dbReference type="FunFam" id="1.20.1070.10:FF:000183">
    <property type="entry name" value="Urotensin-2 receptor"/>
    <property type="match status" value="1"/>
</dbReference>
<dbReference type="Gene3D" id="1.20.1070.10">
    <property type="entry name" value="Rhodopsin 7-helix transmembrane proteins"/>
    <property type="match status" value="1"/>
</dbReference>
<dbReference type="InterPro" id="IPR000276">
    <property type="entry name" value="GPCR_Rhodpsn"/>
</dbReference>
<dbReference type="InterPro" id="IPR017452">
    <property type="entry name" value="GPCR_Rhodpsn_7TM"/>
</dbReference>
<dbReference type="InterPro" id="IPR000670">
    <property type="entry name" value="Urot_II_rcpt"/>
</dbReference>
<dbReference type="PANTHER" id="PTHR24230">
    <property type="entry name" value="G-PROTEIN COUPLED RECEPTOR"/>
    <property type="match status" value="1"/>
</dbReference>
<dbReference type="PANTHER" id="PTHR24230:SF60">
    <property type="entry name" value="UROTENSIN-2 RECEPTOR"/>
    <property type="match status" value="1"/>
</dbReference>
<dbReference type="Pfam" id="PF00001">
    <property type="entry name" value="7tm_1"/>
    <property type="match status" value="1"/>
</dbReference>
<dbReference type="PRINTS" id="PR00237">
    <property type="entry name" value="GPCRRHODOPSN"/>
</dbReference>
<dbReference type="PRINTS" id="PR00647">
    <property type="entry name" value="UROTENSIN2R"/>
</dbReference>
<dbReference type="SUPFAM" id="SSF81321">
    <property type="entry name" value="Family A G protein-coupled receptor-like"/>
    <property type="match status" value="1"/>
</dbReference>
<dbReference type="PROSITE" id="PS00237">
    <property type="entry name" value="G_PROTEIN_RECEP_F1_1"/>
    <property type="match status" value="1"/>
</dbReference>
<dbReference type="PROSITE" id="PS50262">
    <property type="entry name" value="G_PROTEIN_RECEP_F1_2"/>
    <property type="match status" value="1"/>
</dbReference>
<name>UR2R_MOUSE</name>
<accession>Q8VIH9</accession>
<organism>
    <name type="scientific">Mus musculus</name>
    <name type="common">Mouse</name>
    <dbReference type="NCBI Taxonomy" id="10090"/>
    <lineage>
        <taxon>Eukaryota</taxon>
        <taxon>Metazoa</taxon>
        <taxon>Chordata</taxon>
        <taxon>Craniata</taxon>
        <taxon>Vertebrata</taxon>
        <taxon>Euteleostomi</taxon>
        <taxon>Mammalia</taxon>
        <taxon>Eutheria</taxon>
        <taxon>Euarchontoglires</taxon>
        <taxon>Glires</taxon>
        <taxon>Rodentia</taxon>
        <taxon>Myomorpha</taxon>
        <taxon>Muroidea</taxon>
        <taxon>Muridae</taxon>
        <taxon>Murinae</taxon>
        <taxon>Mus</taxon>
        <taxon>Mus</taxon>
    </lineage>
</organism>